<name>FMT_SALEP</name>
<organism>
    <name type="scientific">Salmonella enteritidis PT4 (strain P125109)</name>
    <dbReference type="NCBI Taxonomy" id="550537"/>
    <lineage>
        <taxon>Bacteria</taxon>
        <taxon>Pseudomonadati</taxon>
        <taxon>Pseudomonadota</taxon>
        <taxon>Gammaproteobacteria</taxon>
        <taxon>Enterobacterales</taxon>
        <taxon>Enterobacteriaceae</taxon>
        <taxon>Salmonella</taxon>
    </lineage>
</organism>
<protein>
    <recommendedName>
        <fullName evidence="1">Methionyl-tRNA formyltransferase</fullName>
        <ecNumber evidence="1">2.1.2.9</ecNumber>
    </recommendedName>
</protein>
<gene>
    <name evidence="1" type="primary">fmt</name>
    <name type="ordered locus">SEN3235</name>
</gene>
<keyword id="KW-0648">Protein biosynthesis</keyword>
<keyword id="KW-0808">Transferase</keyword>
<feature type="chain" id="PRO_1000098437" description="Methionyl-tRNA formyltransferase">
    <location>
        <begin position="1"/>
        <end position="315"/>
    </location>
</feature>
<feature type="binding site" evidence="1">
    <location>
        <begin position="113"/>
        <end position="116"/>
    </location>
    <ligand>
        <name>(6S)-5,6,7,8-tetrahydrofolate</name>
        <dbReference type="ChEBI" id="CHEBI:57453"/>
    </ligand>
</feature>
<reference key="1">
    <citation type="journal article" date="2008" name="Genome Res.">
        <title>Comparative genome analysis of Salmonella enteritidis PT4 and Salmonella gallinarum 287/91 provides insights into evolutionary and host adaptation pathways.</title>
        <authorList>
            <person name="Thomson N.R."/>
            <person name="Clayton D.J."/>
            <person name="Windhorst D."/>
            <person name="Vernikos G."/>
            <person name="Davidson S."/>
            <person name="Churcher C."/>
            <person name="Quail M.A."/>
            <person name="Stevens M."/>
            <person name="Jones M.A."/>
            <person name="Watson M."/>
            <person name="Barron A."/>
            <person name="Layton A."/>
            <person name="Pickard D."/>
            <person name="Kingsley R.A."/>
            <person name="Bignell A."/>
            <person name="Clark L."/>
            <person name="Harris B."/>
            <person name="Ormond D."/>
            <person name="Abdellah Z."/>
            <person name="Brooks K."/>
            <person name="Cherevach I."/>
            <person name="Chillingworth T."/>
            <person name="Woodward J."/>
            <person name="Norberczak H."/>
            <person name="Lord A."/>
            <person name="Arrowsmith C."/>
            <person name="Jagels K."/>
            <person name="Moule S."/>
            <person name="Mungall K."/>
            <person name="Saunders M."/>
            <person name="Whitehead S."/>
            <person name="Chabalgoity J.A."/>
            <person name="Maskell D."/>
            <person name="Humphreys T."/>
            <person name="Roberts M."/>
            <person name="Barrow P.A."/>
            <person name="Dougan G."/>
            <person name="Parkhill J."/>
        </authorList>
    </citation>
    <scope>NUCLEOTIDE SEQUENCE [LARGE SCALE GENOMIC DNA]</scope>
    <source>
        <strain>P125109</strain>
    </source>
</reference>
<proteinExistence type="inferred from homology"/>
<sequence length="315" mass="34018">MSDSLRIIFAGTPDFAARHLDALLTSGHNVVGVFTQPDRPAGRGKKLMPSPVKVLAEEKGLPVFQPVSLRPQENQQLVADLHADVMVVVAYGLILPKAVLDMPRLGCINVHGSLLPRWRGAAPIQRSLWAGDAETGVTIMQMDVGLDTGDMLYKLACPITAEDTSGSLYNKLAELGPQGLITTLKQLADGTAAPEAQNEALVTHAEKLSKEEARIDWSLSAVQLERCIRAFNPWPMSWLEIDGQPVKVWQASVIEDATQSLPGTILAATKQGIQVATGKGILNLLSLQPAGKKAMSAQDLLNSRREWFIPGNRLA</sequence>
<comment type="function">
    <text evidence="1">Attaches a formyl group to the free amino group of methionyl-tRNA(fMet). The formyl group appears to play a dual role in the initiator identity of N-formylmethionyl-tRNA by promoting its recognition by IF2 and preventing the misappropriation of this tRNA by the elongation apparatus.</text>
</comment>
<comment type="catalytic activity">
    <reaction evidence="1">
        <text>L-methionyl-tRNA(fMet) + (6R)-10-formyltetrahydrofolate = N-formyl-L-methionyl-tRNA(fMet) + (6S)-5,6,7,8-tetrahydrofolate + H(+)</text>
        <dbReference type="Rhea" id="RHEA:24380"/>
        <dbReference type="Rhea" id="RHEA-COMP:9952"/>
        <dbReference type="Rhea" id="RHEA-COMP:9953"/>
        <dbReference type="ChEBI" id="CHEBI:15378"/>
        <dbReference type="ChEBI" id="CHEBI:57453"/>
        <dbReference type="ChEBI" id="CHEBI:78530"/>
        <dbReference type="ChEBI" id="CHEBI:78844"/>
        <dbReference type="ChEBI" id="CHEBI:195366"/>
        <dbReference type="EC" id="2.1.2.9"/>
    </reaction>
</comment>
<comment type="similarity">
    <text evidence="1">Belongs to the Fmt family.</text>
</comment>
<accession>B5R1E4</accession>
<evidence type="ECO:0000255" key="1">
    <source>
        <dbReference type="HAMAP-Rule" id="MF_00182"/>
    </source>
</evidence>
<dbReference type="EC" id="2.1.2.9" evidence="1"/>
<dbReference type="EMBL" id="AM933172">
    <property type="protein sequence ID" value="CAR34810.1"/>
    <property type="molecule type" value="Genomic_DNA"/>
</dbReference>
<dbReference type="RefSeq" id="WP_001285173.1">
    <property type="nucleotide sequence ID" value="NC_011294.1"/>
</dbReference>
<dbReference type="SMR" id="B5R1E4"/>
<dbReference type="KEGG" id="set:SEN3235"/>
<dbReference type="HOGENOM" id="CLU_033347_1_2_6"/>
<dbReference type="Proteomes" id="UP000000613">
    <property type="component" value="Chromosome"/>
</dbReference>
<dbReference type="GO" id="GO:0005829">
    <property type="term" value="C:cytosol"/>
    <property type="evidence" value="ECO:0007669"/>
    <property type="project" value="TreeGrafter"/>
</dbReference>
<dbReference type="GO" id="GO:0004479">
    <property type="term" value="F:methionyl-tRNA formyltransferase activity"/>
    <property type="evidence" value="ECO:0007669"/>
    <property type="project" value="UniProtKB-UniRule"/>
</dbReference>
<dbReference type="CDD" id="cd08646">
    <property type="entry name" value="FMT_core_Met-tRNA-FMT_N"/>
    <property type="match status" value="1"/>
</dbReference>
<dbReference type="CDD" id="cd08704">
    <property type="entry name" value="Met_tRNA_FMT_C"/>
    <property type="match status" value="1"/>
</dbReference>
<dbReference type="FunFam" id="3.10.25.10:FF:000001">
    <property type="entry name" value="Methionyl-tRNA formyltransferase"/>
    <property type="match status" value="1"/>
</dbReference>
<dbReference type="FunFam" id="3.40.50.170:FF:000003">
    <property type="entry name" value="Methionyl-tRNA formyltransferase"/>
    <property type="match status" value="1"/>
</dbReference>
<dbReference type="Gene3D" id="3.10.25.10">
    <property type="entry name" value="Formyl transferase, C-terminal domain"/>
    <property type="match status" value="1"/>
</dbReference>
<dbReference type="Gene3D" id="3.40.50.170">
    <property type="entry name" value="Formyl transferase, N-terminal domain"/>
    <property type="match status" value="1"/>
</dbReference>
<dbReference type="HAMAP" id="MF_00182">
    <property type="entry name" value="Formyl_trans"/>
    <property type="match status" value="1"/>
</dbReference>
<dbReference type="InterPro" id="IPR005794">
    <property type="entry name" value="Fmt"/>
</dbReference>
<dbReference type="InterPro" id="IPR005793">
    <property type="entry name" value="Formyl_trans_C"/>
</dbReference>
<dbReference type="InterPro" id="IPR037022">
    <property type="entry name" value="Formyl_trans_C_sf"/>
</dbReference>
<dbReference type="InterPro" id="IPR002376">
    <property type="entry name" value="Formyl_transf_N"/>
</dbReference>
<dbReference type="InterPro" id="IPR036477">
    <property type="entry name" value="Formyl_transf_N_sf"/>
</dbReference>
<dbReference type="InterPro" id="IPR011034">
    <property type="entry name" value="Formyl_transferase-like_C_sf"/>
</dbReference>
<dbReference type="InterPro" id="IPR001555">
    <property type="entry name" value="GART_AS"/>
</dbReference>
<dbReference type="InterPro" id="IPR044135">
    <property type="entry name" value="Met-tRNA-FMT_C"/>
</dbReference>
<dbReference type="InterPro" id="IPR041711">
    <property type="entry name" value="Met-tRNA-FMT_N"/>
</dbReference>
<dbReference type="NCBIfam" id="TIGR00460">
    <property type="entry name" value="fmt"/>
    <property type="match status" value="1"/>
</dbReference>
<dbReference type="PANTHER" id="PTHR11138">
    <property type="entry name" value="METHIONYL-TRNA FORMYLTRANSFERASE"/>
    <property type="match status" value="1"/>
</dbReference>
<dbReference type="PANTHER" id="PTHR11138:SF5">
    <property type="entry name" value="METHIONYL-TRNA FORMYLTRANSFERASE, MITOCHONDRIAL"/>
    <property type="match status" value="1"/>
</dbReference>
<dbReference type="Pfam" id="PF02911">
    <property type="entry name" value="Formyl_trans_C"/>
    <property type="match status" value="1"/>
</dbReference>
<dbReference type="Pfam" id="PF00551">
    <property type="entry name" value="Formyl_trans_N"/>
    <property type="match status" value="1"/>
</dbReference>
<dbReference type="SUPFAM" id="SSF50486">
    <property type="entry name" value="FMT C-terminal domain-like"/>
    <property type="match status" value="1"/>
</dbReference>
<dbReference type="SUPFAM" id="SSF53328">
    <property type="entry name" value="Formyltransferase"/>
    <property type="match status" value="1"/>
</dbReference>
<dbReference type="PROSITE" id="PS00373">
    <property type="entry name" value="GART"/>
    <property type="match status" value="1"/>
</dbReference>